<name>NDUC1_HUMAN</name>
<feature type="transit peptide" description="Mitochondrion" evidence="1">
    <location>
        <begin position="1"/>
        <end position="27"/>
    </location>
</feature>
<feature type="chain" id="PRO_0000020049" description="NADH dehydrogenase [ubiquinone] 1 subunit C1, mitochondrial">
    <location>
        <begin position="28"/>
        <end position="76"/>
    </location>
</feature>
<feature type="transmembrane region" description="Helical" evidence="3">
    <location>
        <begin position="41"/>
        <end position="59"/>
    </location>
</feature>
<organism>
    <name type="scientific">Homo sapiens</name>
    <name type="common">Human</name>
    <dbReference type="NCBI Taxonomy" id="9606"/>
    <lineage>
        <taxon>Eukaryota</taxon>
        <taxon>Metazoa</taxon>
        <taxon>Chordata</taxon>
        <taxon>Craniata</taxon>
        <taxon>Vertebrata</taxon>
        <taxon>Euteleostomi</taxon>
        <taxon>Mammalia</taxon>
        <taxon>Eutheria</taxon>
        <taxon>Euarchontoglires</taxon>
        <taxon>Primates</taxon>
        <taxon>Haplorrhini</taxon>
        <taxon>Catarrhini</taxon>
        <taxon>Hominidae</taxon>
        <taxon>Homo</taxon>
    </lineage>
</organism>
<sequence length="76" mass="8734">MAPSALLRPLSRLLAPARLPSGPSVRSKFYVREPPNAKPDWLKVGFTLGTTVFLWIYLIKQHNEDILEYKRRNGLE</sequence>
<evidence type="ECO:0000250" key="1"/>
<evidence type="ECO:0000250" key="2">
    <source>
        <dbReference type="UniProtKB" id="Q02376"/>
    </source>
</evidence>
<evidence type="ECO:0000255" key="3"/>
<evidence type="ECO:0000269" key="4">
    <source>
    </source>
</evidence>
<evidence type="ECO:0000305" key="5"/>
<comment type="function">
    <text evidence="4">Accessory subunit of the mitochondrial membrane respiratory chain NADH dehydrogenase (Complex I), that is believed not to be involved in catalysis. Complex I functions in the transfer of electrons from NADH to the respiratory chain. The immediate electron acceptor for the enzyme is believed to be ubiquinone.</text>
</comment>
<comment type="subunit">
    <text evidence="4">Complex I is composed of 45 different subunits.</text>
</comment>
<comment type="subcellular location">
    <subcellularLocation>
        <location evidence="2">Mitochondrion inner membrane</location>
        <topology evidence="2">Single-pass membrane protein</topology>
        <orientation evidence="2">Matrix side</orientation>
    </subcellularLocation>
</comment>
<comment type="similarity">
    <text evidence="5">Belongs to the complex I NDUFC1 subunit family.</text>
</comment>
<protein>
    <recommendedName>
        <fullName>NADH dehydrogenase [ubiquinone] 1 subunit C1, mitochondrial</fullName>
    </recommendedName>
    <alternativeName>
        <fullName>Complex I-KFYI</fullName>
        <shortName>CI-KFYI</shortName>
    </alternativeName>
    <alternativeName>
        <fullName>NADH-ubiquinone oxidoreductase KFYI subunit</fullName>
    </alternativeName>
</protein>
<proteinExistence type="evidence at protein level"/>
<keyword id="KW-0002">3D-structure</keyword>
<keyword id="KW-0249">Electron transport</keyword>
<keyword id="KW-0472">Membrane</keyword>
<keyword id="KW-0496">Mitochondrion</keyword>
<keyword id="KW-0999">Mitochondrion inner membrane</keyword>
<keyword id="KW-1267">Proteomics identification</keyword>
<keyword id="KW-1185">Reference proteome</keyword>
<keyword id="KW-0679">Respiratory chain</keyword>
<keyword id="KW-0809">Transit peptide</keyword>
<keyword id="KW-0812">Transmembrane</keyword>
<keyword id="KW-1133">Transmembrane helix</keyword>
<keyword id="KW-0813">Transport</keyword>
<dbReference type="EMBL" id="AF047184">
    <property type="protein sequence ID" value="AAC04269.1"/>
    <property type="molecule type" value="mRNA"/>
</dbReference>
<dbReference type="EMBL" id="AF047435">
    <property type="protein sequence ID" value="AAC39886.1"/>
    <property type="molecule type" value="mRNA"/>
</dbReference>
<dbReference type="EMBL" id="AK291147">
    <property type="protein sequence ID" value="BAF83836.1"/>
    <property type="molecule type" value="mRNA"/>
</dbReference>
<dbReference type="EMBL" id="CH471056">
    <property type="protein sequence ID" value="EAX05121.1"/>
    <property type="molecule type" value="Genomic_DNA"/>
</dbReference>
<dbReference type="EMBL" id="BC101798">
    <property type="protein sequence ID" value="AAI01799.1"/>
    <property type="molecule type" value="mRNA"/>
</dbReference>
<dbReference type="EMBL" id="BC107682">
    <property type="protein sequence ID" value="AAI07683.1"/>
    <property type="molecule type" value="mRNA"/>
</dbReference>
<dbReference type="EMBL" id="BC112061">
    <property type="protein sequence ID" value="AAI12062.1"/>
    <property type="molecule type" value="mRNA"/>
</dbReference>
<dbReference type="CCDS" id="CCDS3746.1"/>
<dbReference type="PIR" id="JC5823">
    <property type="entry name" value="JC5823"/>
</dbReference>
<dbReference type="RefSeq" id="NP_001171915.1">
    <property type="nucleotide sequence ID" value="NM_001184986.1"/>
</dbReference>
<dbReference type="RefSeq" id="NP_001171916.1">
    <property type="nucleotide sequence ID" value="NM_001184987.1"/>
</dbReference>
<dbReference type="RefSeq" id="NP_001171917.1">
    <property type="nucleotide sequence ID" value="NM_001184988.1"/>
</dbReference>
<dbReference type="RefSeq" id="NP_001171918.1">
    <property type="nucleotide sequence ID" value="NM_001184989.2"/>
</dbReference>
<dbReference type="RefSeq" id="NP_001171919.1">
    <property type="nucleotide sequence ID" value="NM_001184990.1"/>
</dbReference>
<dbReference type="RefSeq" id="NP_001171920.1">
    <property type="nucleotide sequence ID" value="NM_001184991.1"/>
</dbReference>
<dbReference type="RefSeq" id="NP_002485.1">
    <property type="nucleotide sequence ID" value="NM_002494.3"/>
</dbReference>
<dbReference type="PDB" id="5XTC">
    <property type="method" value="EM"/>
    <property type="resolution" value="3.70 A"/>
    <property type="chains" value="f=28-74"/>
</dbReference>
<dbReference type="PDB" id="5XTD">
    <property type="method" value="EM"/>
    <property type="resolution" value="3.70 A"/>
    <property type="chains" value="f=28-74"/>
</dbReference>
<dbReference type="PDB" id="5XTH">
    <property type="method" value="EM"/>
    <property type="resolution" value="3.90 A"/>
    <property type="chains" value="f=28-74"/>
</dbReference>
<dbReference type="PDB" id="5XTI">
    <property type="method" value="EM"/>
    <property type="resolution" value="17.40 A"/>
    <property type="chains" value="Bf/f=28-74"/>
</dbReference>
<dbReference type="PDBsum" id="5XTC"/>
<dbReference type="PDBsum" id="5XTD"/>
<dbReference type="PDBsum" id="5XTH"/>
<dbReference type="PDBsum" id="5XTI"/>
<dbReference type="SMR" id="O43677"/>
<dbReference type="BioGRID" id="110797">
    <property type="interactions" value="4"/>
</dbReference>
<dbReference type="ComplexPortal" id="CPX-577">
    <property type="entry name" value="Mitochondrial respiratory chain complex I"/>
</dbReference>
<dbReference type="CORUM" id="O43677"/>
<dbReference type="FunCoup" id="O43677">
    <property type="interactions" value="358"/>
</dbReference>
<dbReference type="STRING" id="9606.ENSP00000441126"/>
<dbReference type="BindingDB" id="O43677"/>
<dbReference type="ChEMBL" id="CHEMBL2363065"/>
<dbReference type="DrugBank" id="DB00157">
    <property type="generic name" value="NADH"/>
</dbReference>
<dbReference type="DrugCentral" id="O43677"/>
<dbReference type="iPTMnet" id="O43677"/>
<dbReference type="PhosphoSitePlus" id="O43677"/>
<dbReference type="BioMuta" id="NDUFC1"/>
<dbReference type="jPOST" id="O43677"/>
<dbReference type="MassIVE" id="O43677"/>
<dbReference type="PaxDb" id="9606-ENSP00000441126"/>
<dbReference type="PeptideAtlas" id="O43677"/>
<dbReference type="ProteomicsDB" id="49105"/>
<dbReference type="Pumba" id="O43677"/>
<dbReference type="TopDownProteomics" id="O43677"/>
<dbReference type="Antibodypedia" id="49615">
    <property type="antibodies" value="51 antibodies from 20 providers"/>
</dbReference>
<dbReference type="DNASU" id="4717"/>
<dbReference type="Ensembl" id="ENST00000394223.2">
    <property type="protein sequence ID" value="ENSP00000377770.1"/>
    <property type="gene ID" value="ENSG00000109390.13"/>
</dbReference>
<dbReference type="Ensembl" id="ENST00000394228.5">
    <property type="protein sequence ID" value="ENSP00000377775.1"/>
    <property type="gene ID" value="ENSG00000109390.13"/>
</dbReference>
<dbReference type="Ensembl" id="ENST00000503997.5">
    <property type="protein sequence ID" value="ENSP00000425882.1"/>
    <property type="gene ID" value="ENSG00000109390.13"/>
</dbReference>
<dbReference type="Ensembl" id="ENST00000505036.5">
    <property type="protein sequence ID" value="ENSP00000421195.1"/>
    <property type="gene ID" value="ENSG00000109390.13"/>
</dbReference>
<dbReference type="Ensembl" id="ENST00000539002.5">
    <property type="protein sequence ID" value="ENSP00000440133.1"/>
    <property type="gene ID" value="ENSG00000109390.13"/>
</dbReference>
<dbReference type="Ensembl" id="ENST00000539387.5">
    <property type="protein sequence ID" value="ENSP00000439882.1"/>
    <property type="gene ID" value="ENSG00000109390.13"/>
</dbReference>
<dbReference type="Ensembl" id="ENST00000544855.5">
    <property type="protein sequence ID" value="ENSP00000441126.1"/>
    <property type="gene ID" value="ENSG00000109390.13"/>
</dbReference>
<dbReference type="GeneID" id="4717"/>
<dbReference type="KEGG" id="hsa:4717"/>
<dbReference type="MANE-Select" id="ENST00000394223.2">
    <property type="protein sequence ID" value="ENSP00000377770.1"/>
    <property type="RefSeq nucleotide sequence ID" value="NM_001184989.2"/>
    <property type="RefSeq protein sequence ID" value="NP_001171918.1"/>
</dbReference>
<dbReference type="UCSC" id="uc003ihs.3">
    <property type="organism name" value="human"/>
</dbReference>
<dbReference type="AGR" id="HGNC:7705"/>
<dbReference type="CTD" id="4717"/>
<dbReference type="DisGeNET" id="4717"/>
<dbReference type="GeneCards" id="NDUFC1"/>
<dbReference type="HGNC" id="HGNC:7705">
    <property type="gene designation" value="NDUFC1"/>
</dbReference>
<dbReference type="HPA" id="ENSG00000109390">
    <property type="expression patterns" value="Group enriched (heart muscle, skeletal muscle, tongue)"/>
</dbReference>
<dbReference type="MalaCards" id="NDUFC1"/>
<dbReference type="MIM" id="603844">
    <property type="type" value="gene"/>
</dbReference>
<dbReference type="neXtProt" id="NX_O43677"/>
<dbReference type="OpenTargets" id="ENSG00000109390"/>
<dbReference type="PharmGKB" id="PA31516"/>
<dbReference type="VEuPathDB" id="HostDB:ENSG00000109390"/>
<dbReference type="eggNOG" id="ENOG502SFTF">
    <property type="taxonomic scope" value="Eukaryota"/>
</dbReference>
<dbReference type="GeneTree" id="ENSGT00390000002565"/>
<dbReference type="HOGENOM" id="CLU_199185_0_0_1"/>
<dbReference type="InParanoid" id="O43677"/>
<dbReference type="OMA" id="SAFIWGL"/>
<dbReference type="OrthoDB" id="9900059at2759"/>
<dbReference type="PAN-GO" id="O43677">
    <property type="GO annotations" value="1 GO annotation based on evolutionary models"/>
</dbReference>
<dbReference type="PhylomeDB" id="O43677"/>
<dbReference type="TreeFam" id="TF338333"/>
<dbReference type="BioCyc" id="MetaCyc:HS03223-MONOMER"/>
<dbReference type="PathwayCommons" id="O43677"/>
<dbReference type="Reactome" id="R-HSA-611105">
    <property type="pathway name" value="Respiratory electron transport"/>
</dbReference>
<dbReference type="Reactome" id="R-HSA-6799198">
    <property type="pathway name" value="Complex I biogenesis"/>
</dbReference>
<dbReference type="SignaLink" id="O43677"/>
<dbReference type="SIGNOR" id="O43677"/>
<dbReference type="BioGRID-ORCS" id="4717">
    <property type="hits" value="150 hits in 1130 CRISPR screens"/>
</dbReference>
<dbReference type="ChiTaRS" id="NDUFC1">
    <property type="organism name" value="human"/>
</dbReference>
<dbReference type="GeneWiki" id="NDUFC1"/>
<dbReference type="GenomeRNAi" id="4717"/>
<dbReference type="Pharos" id="O43677">
    <property type="development level" value="Tclin"/>
</dbReference>
<dbReference type="PRO" id="PR:O43677"/>
<dbReference type="Proteomes" id="UP000005640">
    <property type="component" value="Chromosome 4"/>
</dbReference>
<dbReference type="RNAct" id="O43677">
    <property type="molecule type" value="protein"/>
</dbReference>
<dbReference type="Bgee" id="ENSG00000109390">
    <property type="expression patterns" value="Expressed in renal medulla and 212 other cell types or tissues"/>
</dbReference>
<dbReference type="ExpressionAtlas" id="O43677">
    <property type="expression patterns" value="baseline and differential"/>
</dbReference>
<dbReference type="GO" id="GO:0005743">
    <property type="term" value="C:mitochondrial inner membrane"/>
    <property type="evidence" value="ECO:0000314"/>
    <property type="project" value="ComplexPortal"/>
</dbReference>
<dbReference type="GO" id="GO:0005739">
    <property type="term" value="C:mitochondrion"/>
    <property type="evidence" value="ECO:0006056"/>
    <property type="project" value="FlyBase"/>
</dbReference>
<dbReference type="GO" id="GO:0045271">
    <property type="term" value="C:respiratory chain complex I"/>
    <property type="evidence" value="ECO:0000314"/>
    <property type="project" value="UniProtKB"/>
</dbReference>
<dbReference type="GO" id="GO:0008137">
    <property type="term" value="F:NADH dehydrogenase (ubiquinone) activity"/>
    <property type="evidence" value="ECO:0000304"/>
    <property type="project" value="ProtInc"/>
</dbReference>
<dbReference type="GO" id="GO:0009060">
    <property type="term" value="P:aerobic respiration"/>
    <property type="evidence" value="ECO:0000303"/>
    <property type="project" value="ComplexPortal"/>
</dbReference>
<dbReference type="GO" id="GO:0006120">
    <property type="term" value="P:mitochondrial electron transport, NADH to ubiquinone"/>
    <property type="evidence" value="ECO:0000304"/>
    <property type="project" value="ProtInc"/>
</dbReference>
<dbReference type="GO" id="GO:0042776">
    <property type="term" value="P:proton motive force-driven mitochondrial ATP synthesis"/>
    <property type="evidence" value="ECO:0000303"/>
    <property type="project" value="ComplexPortal"/>
</dbReference>
<dbReference type="InterPro" id="IPR026192">
    <property type="entry name" value="NDUFC1"/>
</dbReference>
<dbReference type="PANTHER" id="PTHR17097:SF0">
    <property type="entry name" value="NADH DEHYDROGENASE [UBIQUINONE] 1 SUBUNIT C1, MITOCHONDRIAL"/>
    <property type="match status" value="1"/>
</dbReference>
<dbReference type="PANTHER" id="PTHR17097">
    <property type="entry name" value="NADH-UBIQUINONE OXIDOREDUCTASE KFYI SUBUNIT"/>
    <property type="match status" value="1"/>
</dbReference>
<dbReference type="Pfam" id="PF15088">
    <property type="entry name" value="NADH_dh_m_C1"/>
    <property type="match status" value="1"/>
</dbReference>
<reference key="1">
    <citation type="journal article" date="1997" name="Biochem. Biophys. Res. Commun.">
        <title>Identification and primary structure of five human NADH-ubiquinone oxidoreductase subunits.</title>
        <authorList>
            <person name="Ton C."/>
            <person name="Hwang D.M."/>
            <person name="Dempsey A.A."/>
            <person name="Liew C.-C."/>
        </authorList>
    </citation>
    <scope>NUCLEOTIDE SEQUENCE [MRNA]</scope>
    <source>
        <tissue>Heart</tissue>
    </source>
</reference>
<reference key="2">
    <citation type="journal article" date="1998" name="Proc. Natl. Acad. Sci. U.S.A.">
        <title>Identification of genes expressed in human CD34(+) hematopoietic stem/progenitor cells by expressed sequence tags and efficient full-length cDNA cloning.</title>
        <authorList>
            <person name="Mao M."/>
            <person name="Fu G."/>
            <person name="Wu J.-S."/>
            <person name="Zhang Q.-H."/>
            <person name="Zhou J."/>
            <person name="Kan L.-X."/>
            <person name="Huang Q.-H."/>
            <person name="He K.-L."/>
            <person name="Gu B.-W."/>
            <person name="Han Z.-G."/>
            <person name="Shen Y."/>
            <person name="Gu J."/>
            <person name="Yu Y.-P."/>
            <person name="Xu S.-H."/>
            <person name="Wang Y.-X."/>
            <person name="Chen S.-J."/>
            <person name="Chen Z."/>
        </authorList>
    </citation>
    <scope>NUCLEOTIDE SEQUENCE [LARGE SCALE MRNA]</scope>
    <source>
        <tissue>Umbilical cord blood</tissue>
    </source>
</reference>
<reference key="3">
    <citation type="journal article" date="2004" name="Nat. Genet.">
        <title>Complete sequencing and characterization of 21,243 full-length human cDNAs.</title>
        <authorList>
            <person name="Ota T."/>
            <person name="Suzuki Y."/>
            <person name="Nishikawa T."/>
            <person name="Otsuki T."/>
            <person name="Sugiyama T."/>
            <person name="Irie R."/>
            <person name="Wakamatsu A."/>
            <person name="Hayashi K."/>
            <person name="Sato H."/>
            <person name="Nagai K."/>
            <person name="Kimura K."/>
            <person name="Makita H."/>
            <person name="Sekine M."/>
            <person name="Obayashi M."/>
            <person name="Nishi T."/>
            <person name="Shibahara T."/>
            <person name="Tanaka T."/>
            <person name="Ishii S."/>
            <person name="Yamamoto J."/>
            <person name="Saito K."/>
            <person name="Kawai Y."/>
            <person name="Isono Y."/>
            <person name="Nakamura Y."/>
            <person name="Nagahari K."/>
            <person name="Murakami K."/>
            <person name="Yasuda T."/>
            <person name="Iwayanagi T."/>
            <person name="Wagatsuma M."/>
            <person name="Shiratori A."/>
            <person name="Sudo H."/>
            <person name="Hosoiri T."/>
            <person name="Kaku Y."/>
            <person name="Kodaira H."/>
            <person name="Kondo H."/>
            <person name="Sugawara M."/>
            <person name="Takahashi M."/>
            <person name="Kanda K."/>
            <person name="Yokoi T."/>
            <person name="Furuya T."/>
            <person name="Kikkawa E."/>
            <person name="Omura Y."/>
            <person name="Abe K."/>
            <person name="Kamihara K."/>
            <person name="Katsuta N."/>
            <person name="Sato K."/>
            <person name="Tanikawa M."/>
            <person name="Yamazaki M."/>
            <person name="Ninomiya K."/>
            <person name="Ishibashi T."/>
            <person name="Yamashita H."/>
            <person name="Murakawa K."/>
            <person name="Fujimori K."/>
            <person name="Tanai H."/>
            <person name="Kimata M."/>
            <person name="Watanabe M."/>
            <person name="Hiraoka S."/>
            <person name="Chiba Y."/>
            <person name="Ishida S."/>
            <person name="Ono Y."/>
            <person name="Takiguchi S."/>
            <person name="Watanabe S."/>
            <person name="Yosida M."/>
            <person name="Hotuta T."/>
            <person name="Kusano J."/>
            <person name="Kanehori K."/>
            <person name="Takahashi-Fujii A."/>
            <person name="Hara H."/>
            <person name="Tanase T.-O."/>
            <person name="Nomura Y."/>
            <person name="Togiya S."/>
            <person name="Komai F."/>
            <person name="Hara R."/>
            <person name="Takeuchi K."/>
            <person name="Arita M."/>
            <person name="Imose N."/>
            <person name="Musashino K."/>
            <person name="Yuuki H."/>
            <person name="Oshima A."/>
            <person name="Sasaki N."/>
            <person name="Aotsuka S."/>
            <person name="Yoshikawa Y."/>
            <person name="Matsunawa H."/>
            <person name="Ichihara T."/>
            <person name="Shiohata N."/>
            <person name="Sano S."/>
            <person name="Moriya S."/>
            <person name="Momiyama H."/>
            <person name="Satoh N."/>
            <person name="Takami S."/>
            <person name="Terashima Y."/>
            <person name="Suzuki O."/>
            <person name="Nakagawa S."/>
            <person name="Senoh A."/>
            <person name="Mizoguchi H."/>
            <person name="Goto Y."/>
            <person name="Shimizu F."/>
            <person name="Wakebe H."/>
            <person name="Hishigaki H."/>
            <person name="Watanabe T."/>
            <person name="Sugiyama A."/>
            <person name="Takemoto M."/>
            <person name="Kawakami B."/>
            <person name="Yamazaki M."/>
            <person name="Watanabe K."/>
            <person name="Kumagai A."/>
            <person name="Itakura S."/>
            <person name="Fukuzumi Y."/>
            <person name="Fujimori Y."/>
            <person name="Komiyama M."/>
            <person name="Tashiro H."/>
            <person name="Tanigami A."/>
            <person name="Fujiwara T."/>
            <person name="Ono T."/>
            <person name="Yamada K."/>
            <person name="Fujii Y."/>
            <person name="Ozaki K."/>
            <person name="Hirao M."/>
            <person name="Ohmori Y."/>
            <person name="Kawabata A."/>
            <person name="Hikiji T."/>
            <person name="Kobatake N."/>
            <person name="Inagaki H."/>
            <person name="Ikema Y."/>
            <person name="Okamoto S."/>
            <person name="Okitani R."/>
            <person name="Kawakami T."/>
            <person name="Noguchi S."/>
            <person name="Itoh T."/>
            <person name="Shigeta K."/>
            <person name="Senba T."/>
            <person name="Matsumura K."/>
            <person name="Nakajima Y."/>
            <person name="Mizuno T."/>
            <person name="Morinaga M."/>
            <person name="Sasaki M."/>
            <person name="Togashi T."/>
            <person name="Oyama M."/>
            <person name="Hata H."/>
            <person name="Watanabe M."/>
            <person name="Komatsu T."/>
            <person name="Mizushima-Sugano J."/>
            <person name="Satoh T."/>
            <person name="Shirai Y."/>
            <person name="Takahashi Y."/>
            <person name="Nakagawa K."/>
            <person name="Okumura K."/>
            <person name="Nagase T."/>
            <person name="Nomura N."/>
            <person name="Kikuchi H."/>
            <person name="Masuho Y."/>
            <person name="Yamashita R."/>
            <person name="Nakai K."/>
            <person name="Yada T."/>
            <person name="Nakamura Y."/>
            <person name="Ohara O."/>
            <person name="Isogai T."/>
            <person name="Sugano S."/>
        </authorList>
    </citation>
    <scope>NUCLEOTIDE SEQUENCE [LARGE SCALE MRNA]</scope>
</reference>
<reference key="4">
    <citation type="submission" date="2005-09" db="EMBL/GenBank/DDBJ databases">
        <authorList>
            <person name="Mural R.J."/>
            <person name="Istrail S."/>
            <person name="Sutton G.G."/>
            <person name="Florea L."/>
            <person name="Halpern A.L."/>
            <person name="Mobarry C.M."/>
            <person name="Lippert R."/>
            <person name="Walenz B."/>
            <person name="Shatkay H."/>
            <person name="Dew I."/>
            <person name="Miller J.R."/>
            <person name="Flanigan M.J."/>
            <person name="Edwards N.J."/>
            <person name="Bolanos R."/>
            <person name="Fasulo D."/>
            <person name="Halldorsson B.V."/>
            <person name="Hannenhalli S."/>
            <person name="Turner R."/>
            <person name="Yooseph S."/>
            <person name="Lu F."/>
            <person name="Nusskern D.R."/>
            <person name="Shue B.C."/>
            <person name="Zheng X.H."/>
            <person name="Zhong F."/>
            <person name="Delcher A.L."/>
            <person name="Huson D.H."/>
            <person name="Kravitz S.A."/>
            <person name="Mouchard L."/>
            <person name="Reinert K."/>
            <person name="Remington K.A."/>
            <person name="Clark A.G."/>
            <person name="Waterman M.S."/>
            <person name="Eichler E.E."/>
            <person name="Adams M.D."/>
            <person name="Hunkapiller M.W."/>
            <person name="Myers E.W."/>
            <person name="Venter J.C."/>
        </authorList>
    </citation>
    <scope>NUCLEOTIDE SEQUENCE [LARGE SCALE GENOMIC DNA]</scope>
</reference>
<reference key="5">
    <citation type="journal article" date="2004" name="Genome Res.">
        <title>The status, quality, and expansion of the NIH full-length cDNA project: the Mammalian Gene Collection (MGC).</title>
        <authorList>
            <consortium name="The MGC Project Team"/>
        </authorList>
    </citation>
    <scope>NUCLEOTIDE SEQUENCE [LARGE SCALE MRNA]</scope>
    <source>
        <tissue>Brain</tissue>
        <tissue>Skin</tissue>
    </source>
</reference>
<reference key="6">
    <citation type="journal article" date="2016" name="Nature">
        <title>Accessory subunits are integral for assembly and function of human mitochondrial complex I.</title>
        <authorList>
            <person name="Stroud D.A."/>
            <person name="Surgenor E.E."/>
            <person name="Formosa L.E."/>
            <person name="Reljic B."/>
            <person name="Frazier A.E."/>
            <person name="Dibley M.G."/>
            <person name="Osellame L.D."/>
            <person name="Stait T."/>
            <person name="Beilharz T.H."/>
            <person name="Thorburn D.R."/>
            <person name="Salim A."/>
            <person name="Ryan M.T."/>
        </authorList>
    </citation>
    <scope>FUNCTION</scope>
    <scope>IDENTIFICATION IN THE NADH-UBIQUINONE OXIDOREDUCTASE COMPLEX</scope>
</reference>
<gene>
    <name type="primary">NDUFC1</name>
</gene>
<accession>O43677</accession>
<accession>A8K532</accession>
<accession>Q3MIJ9</accession>